<feature type="chain" id="PRO_0000409094" description="UDP-glycosyltransferase 76E11">
    <location>
        <begin position="1"/>
        <end position="451"/>
    </location>
</feature>
<feature type="binding site" evidence="1">
    <location>
        <position position="273"/>
    </location>
    <ligand>
        <name>UDP-alpha-D-glucose</name>
        <dbReference type="ChEBI" id="CHEBI:58885"/>
    </ligand>
</feature>
<feature type="binding site" evidence="1">
    <location>
        <begin position="332"/>
        <end position="334"/>
    </location>
    <ligand>
        <name>UDP-alpha-D-glucose</name>
        <dbReference type="ChEBI" id="CHEBI:58885"/>
    </ligand>
</feature>
<feature type="binding site" evidence="1">
    <location>
        <begin position="349"/>
        <end position="357"/>
    </location>
    <ligand>
        <name>UDP-alpha-D-glucose</name>
        <dbReference type="ChEBI" id="CHEBI:58885"/>
    </ligand>
</feature>
<feature type="binding site" evidence="1">
    <location>
        <begin position="371"/>
        <end position="374"/>
    </location>
    <ligand>
        <name>UDP-alpha-D-glucose</name>
        <dbReference type="ChEBI" id="CHEBI:58885"/>
    </ligand>
</feature>
<feature type="sequence conflict" description="In Ref. 4; AAM61443." evidence="3" ref="4">
    <original>E</original>
    <variation>D</variation>
    <location>
        <position position="2"/>
    </location>
</feature>
<feature type="sequence conflict" description="In Ref. 4; AAM61443." evidence="3" ref="4">
    <original>V</original>
    <variation>M</variation>
    <location>
        <position position="11"/>
    </location>
</feature>
<feature type="sequence conflict" description="In Ref. 4; AAM61443." evidence="3" ref="4">
    <original>A</original>
    <variation>V</variation>
    <location>
        <position position="342"/>
    </location>
</feature>
<proteinExistence type="evidence at transcript level"/>
<sequence length="451" mass="50564">MEEKPAGRRVVLVAVPAQGHISPIMQLAKTLHLKGFSITIAQTKFNYFSPSDDFTDFQFVTIPESLPESDFEDLGPIEFLHKLNKECQVSFKDCLGQLLLQQGNEIACVVYDEFMYFAEAAAKEFKLPNVIFSTTSATAFVCRSAFDKLYANSILTPLKEPKGQQNELVPEFHPLRCKDFPVSHWASLESMMELYRNTVDKRTASSVIINTASCLESSSLSRLQQQLQIPVYPIGPLHLVASASTSLLEENKSCIEWLNKQKKNSVIFVSLGSLALMEINEVIETALGLDSSKQQFLWVIRPGSVRGSEWIENLPKEFSKIISGRGYIVKWAPQKEVLSHPAVGGFWSHCGWNSTLESIGEGVPMICKPFSSDQMVNARYLECVWKIGIQVEGDLDRGAVERAVRRLMVEEEGEGMRKRAISLKEQLRASVISGGSSHNSLEEFVHYMRTL</sequence>
<comment type="function">
    <text evidence="2">Possesses low quercetin 3-O-glucosyltransferase and 7-O-glucosyltransferase activities in vitro.</text>
</comment>
<comment type="similarity">
    <text evidence="3">Belongs to the UDP-glycosyltransferase family.</text>
</comment>
<keyword id="KW-0328">Glycosyltransferase</keyword>
<keyword id="KW-1185">Reference proteome</keyword>
<keyword id="KW-0808">Transferase</keyword>
<name>U7E11_ARATH</name>
<protein>
    <recommendedName>
        <fullName>UDP-glycosyltransferase 76E11</fullName>
        <ecNumber>2.4.1.-</ecNumber>
    </recommendedName>
</protein>
<organism>
    <name type="scientific">Arabidopsis thaliana</name>
    <name type="common">Mouse-ear cress</name>
    <dbReference type="NCBI Taxonomy" id="3702"/>
    <lineage>
        <taxon>Eukaryota</taxon>
        <taxon>Viridiplantae</taxon>
        <taxon>Streptophyta</taxon>
        <taxon>Embryophyta</taxon>
        <taxon>Tracheophyta</taxon>
        <taxon>Spermatophyta</taxon>
        <taxon>Magnoliopsida</taxon>
        <taxon>eudicotyledons</taxon>
        <taxon>Gunneridae</taxon>
        <taxon>Pentapetalae</taxon>
        <taxon>rosids</taxon>
        <taxon>malvids</taxon>
        <taxon>Brassicales</taxon>
        <taxon>Brassicaceae</taxon>
        <taxon>Camelineae</taxon>
        <taxon>Arabidopsis</taxon>
    </lineage>
</organism>
<gene>
    <name type="primary">UGT76E11</name>
    <name type="ordered locus">At3g46670</name>
    <name type="ORF">F12A12.190</name>
</gene>
<accession>Q9SNB1</accession>
<accession>Q8LFF5</accession>
<reference key="1">
    <citation type="journal article" date="2000" name="Nature">
        <title>Sequence and analysis of chromosome 3 of the plant Arabidopsis thaliana.</title>
        <authorList>
            <person name="Salanoubat M."/>
            <person name="Lemcke K."/>
            <person name="Rieger M."/>
            <person name="Ansorge W."/>
            <person name="Unseld M."/>
            <person name="Fartmann B."/>
            <person name="Valle G."/>
            <person name="Bloecker H."/>
            <person name="Perez-Alonso M."/>
            <person name="Obermaier B."/>
            <person name="Delseny M."/>
            <person name="Boutry M."/>
            <person name="Grivell L.A."/>
            <person name="Mache R."/>
            <person name="Puigdomenech P."/>
            <person name="De Simone V."/>
            <person name="Choisne N."/>
            <person name="Artiguenave F."/>
            <person name="Robert C."/>
            <person name="Brottier P."/>
            <person name="Wincker P."/>
            <person name="Cattolico L."/>
            <person name="Weissenbach J."/>
            <person name="Saurin W."/>
            <person name="Quetier F."/>
            <person name="Schaefer M."/>
            <person name="Mueller-Auer S."/>
            <person name="Gabel C."/>
            <person name="Fuchs M."/>
            <person name="Benes V."/>
            <person name="Wurmbach E."/>
            <person name="Drzonek H."/>
            <person name="Erfle H."/>
            <person name="Jordan N."/>
            <person name="Bangert S."/>
            <person name="Wiedelmann R."/>
            <person name="Kranz H."/>
            <person name="Voss H."/>
            <person name="Holland R."/>
            <person name="Brandt P."/>
            <person name="Nyakatura G."/>
            <person name="Vezzi A."/>
            <person name="D'Angelo M."/>
            <person name="Pallavicini A."/>
            <person name="Toppo S."/>
            <person name="Simionati B."/>
            <person name="Conrad A."/>
            <person name="Hornischer K."/>
            <person name="Kauer G."/>
            <person name="Loehnert T.-H."/>
            <person name="Nordsiek G."/>
            <person name="Reichelt J."/>
            <person name="Scharfe M."/>
            <person name="Schoen O."/>
            <person name="Bargues M."/>
            <person name="Terol J."/>
            <person name="Climent J."/>
            <person name="Navarro P."/>
            <person name="Collado C."/>
            <person name="Perez-Perez A."/>
            <person name="Ottenwaelder B."/>
            <person name="Duchemin D."/>
            <person name="Cooke R."/>
            <person name="Laudie M."/>
            <person name="Berger-Llauro C."/>
            <person name="Purnelle B."/>
            <person name="Masuy D."/>
            <person name="de Haan M."/>
            <person name="Maarse A.C."/>
            <person name="Alcaraz J.-P."/>
            <person name="Cottet A."/>
            <person name="Casacuberta E."/>
            <person name="Monfort A."/>
            <person name="Argiriou A."/>
            <person name="Flores M."/>
            <person name="Liguori R."/>
            <person name="Vitale D."/>
            <person name="Mannhaupt G."/>
            <person name="Haase D."/>
            <person name="Schoof H."/>
            <person name="Rudd S."/>
            <person name="Zaccaria P."/>
            <person name="Mewes H.-W."/>
            <person name="Mayer K.F.X."/>
            <person name="Kaul S."/>
            <person name="Town C.D."/>
            <person name="Koo H.L."/>
            <person name="Tallon L.J."/>
            <person name="Jenkins J."/>
            <person name="Rooney T."/>
            <person name="Rizzo M."/>
            <person name="Walts A."/>
            <person name="Utterback T."/>
            <person name="Fujii C.Y."/>
            <person name="Shea T.P."/>
            <person name="Creasy T.H."/>
            <person name="Haas B."/>
            <person name="Maiti R."/>
            <person name="Wu D."/>
            <person name="Peterson J."/>
            <person name="Van Aken S."/>
            <person name="Pai G."/>
            <person name="Militscher J."/>
            <person name="Sellers P."/>
            <person name="Gill J.E."/>
            <person name="Feldblyum T.V."/>
            <person name="Preuss D."/>
            <person name="Lin X."/>
            <person name="Nierman W.C."/>
            <person name="Salzberg S.L."/>
            <person name="White O."/>
            <person name="Venter J.C."/>
            <person name="Fraser C.M."/>
            <person name="Kaneko T."/>
            <person name="Nakamura Y."/>
            <person name="Sato S."/>
            <person name="Kato T."/>
            <person name="Asamizu E."/>
            <person name="Sasamoto S."/>
            <person name="Kimura T."/>
            <person name="Idesawa K."/>
            <person name="Kawashima K."/>
            <person name="Kishida Y."/>
            <person name="Kiyokawa C."/>
            <person name="Kohara M."/>
            <person name="Matsumoto M."/>
            <person name="Matsuno A."/>
            <person name="Muraki A."/>
            <person name="Nakayama S."/>
            <person name="Nakazaki N."/>
            <person name="Shinpo S."/>
            <person name="Takeuchi C."/>
            <person name="Wada T."/>
            <person name="Watanabe A."/>
            <person name="Yamada M."/>
            <person name="Yasuda M."/>
            <person name="Tabata S."/>
        </authorList>
    </citation>
    <scope>NUCLEOTIDE SEQUENCE [LARGE SCALE GENOMIC DNA]</scope>
    <source>
        <strain>cv. Columbia</strain>
    </source>
</reference>
<reference key="2">
    <citation type="journal article" date="2017" name="Plant J.">
        <title>Araport11: a complete reannotation of the Arabidopsis thaliana reference genome.</title>
        <authorList>
            <person name="Cheng C.Y."/>
            <person name="Krishnakumar V."/>
            <person name="Chan A.P."/>
            <person name="Thibaud-Nissen F."/>
            <person name="Schobel S."/>
            <person name="Town C.D."/>
        </authorList>
    </citation>
    <scope>GENOME REANNOTATION</scope>
    <source>
        <strain>cv. Columbia</strain>
    </source>
</reference>
<reference key="3">
    <citation type="journal article" date="2003" name="Science">
        <title>Empirical analysis of transcriptional activity in the Arabidopsis genome.</title>
        <authorList>
            <person name="Yamada K."/>
            <person name="Lim J."/>
            <person name="Dale J.M."/>
            <person name="Chen H."/>
            <person name="Shinn P."/>
            <person name="Palm C.J."/>
            <person name="Southwick A.M."/>
            <person name="Wu H.C."/>
            <person name="Kim C.J."/>
            <person name="Nguyen M."/>
            <person name="Pham P.K."/>
            <person name="Cheuk R.F."/>
            <person name="Karlin-Newmann G."/>
            <person name="Liu S.X."/>
            <person name="Lam B."/>
            <person name="Sakano H."/>
            <person name="Wu T."/>
            <person name="Yu G."/>
            <person name="Miranda M."/>
            <person name="Quach H.L."/>
            <person name="Tripp M."/>
            <person name="Chang C.H."/>
            <person name="Lee J.M."/>
            <person name="Toriumi M.J."/>
            <person name="Chan M.M."/>
            <person name="Tang C.C."/>
            <person name="Onodera C.S."/>
            <person name="Deng J.M."/>
            <person name="Akiyama K."/>
            <person name="Ansari Y."/>
            <person name="Arakawa T."/>
            <person name="Banh J."/>
            <person name="Banno F."/>
            <person name="Bowser L."/>
            <person name="Brooks S.Y."/>
            <person name="Carninci P."/>
            <person name="Chao Q."/>
            <person name="Choy N."/>
            <person name="Enju A."/>
            <person name="Goldsmith A.D."/>
            <person name="Gurjal M."/>
            <person name="Hansen N.F."/>
            <person name="Hayashizaki Y."/>
            <person name="Johnson-Hopson C."/>
            <person name="Hsuan V.W."/>
            <person name="Iida K."/>
            <person name="Karnes M."/>
            <person name="Khan S."/>
            <person name="Koesema E."/>
            <person name="Ishida J."/>
            <person name="Jiang P.X."/>
            <person name="Jones T."/>
            <person name="Kawai J."/>
            <person name="Kamiya A."/>
            <person name="Meyers C."/>
            <person name="Nakajima M."/>
            <person name="Narusaka M."/>
            <person name="Seki M."/>
            <person name="Sakurai T."/>
            <person name="Satou M."/>
            <person name="Tamse R."/>
            <person name="Vaysberg M."/>
            <person name="Wallender E.K."/>
            <person name="Wong C."/>
            <person name="Yamamura Y."/>
            <person name="Yuan S."/>
            <person name="Shinozaki K."/>
            <person name="Davis R.W."/>
            <person name="Theologis A."/>
            <person name="Ecker J.R."/>
        </authorList>
    </citation>
    <scope>NUCLEOTIDE SEQUENCE [LARGE SCALE MRNA]</scope>
    <source>
        <strain>cv. Columbia</strain>
    </source>
</reference>
<reference key="4">
    <citation type="submission" date="2002-03" db="EMBL/GenBank/DDBJ databases">
        <title>Full-length cDNA from Arabidopsis thaliana.</title>
        <authorList>
            <person name="Brover V.V."/>
            <person name="Troukhan M.E."/>
            <person name="Alexandrov N.A."/>
            <person name="Lu Y.-P."/>
            <person name="Flavell R.B."/>
            <person name="Feldmann K.A."/>
        </authorList>
    </citation>
    <scope>NUCLEOTIDE SEQUENCE [LARGE SCALE MRNA]</scope>
</reference>
<reference key="5">
    <citation type="journal article" date="2001" name="J. Biol. Chem.">
        <title>Phylogenetic analysis of the UDP-glycosyltransferase multigene family of Arabidopsis thaliana.</title>
        <authorList>
            <person name="Li Y."/>
            <person name="Baldauf S."/>
            <person name="Lim E.K."/>
            <person name="Bowles D.J."/>
        </authorList>
    </citation>
    <scope>GENE FAMILY</scope>
</reference>
<reference key="6">
    <citation type="journal article" date="2004" name="Biotechnol. Bioeng.">
        <title>Arabidopsis glycosyltransferases as biocatalysts in fermentation for regioselective synthesis of diverse quercetin glucosides.</title>
        <authorList>
            <person name="Lim E.K."/>
            <person name="Ashford D.A."/>
            <person name="Hou B."/>
            <person name="Jackson R.G."/>
            <person name="Bowles D.J."/>
        </authorList>
    </citation>
    <scope>FUNCTION</scope>
</reference>
<evidence type="ECO:0000250" key="1"/>
<evidence type="ECO:0000269" key="2">
    <source>
    </source>
</evidence>
<evidence type="ECO:0000305" key="3"/>
<dbReference type="EC" id="2.4.1.-"/>
<dbReference type="EMBL" id="AL133314">
    <property type="protein sequence ID" value="CAB62337.1"/>
    <property type="molecule type" value="Genomic_DNA"/>
</dbReference>
<dbReference type="EMBL" id="CP002686">
    <property type="protein sequence ID" value="AEE78192.1"/>
    <property type="molecule type" value="Genomic_DNA"/>
</dbReference>
<dbReference type="EMBL" id="AY080716">
    <property type="protein sequence ID" value="AAL85034.1"/>
    <property type="molecule type" value="mRNA"/>
</dbReference>
<dbReference type="EMBL" id="AY117336">
    <property type="protein sequence ID" value="AAM51411.1"/>
    <property type="molecule type" value="mRNA"/>
</dbReference>
<dbReference type="EMBL" id="AY084880">
    <property type="protein sequence ID" value="AAM61443.1"/>
    <property type="molecule type" value="mRNA"/>
</dbReference>
<dbReference type="PIR" id="T45604">
    <property type="entry name" value="T45604"/>
</dbReference>
<dbReference type="RefSeq" id="NP_190251.1">
    <property type="nucleotide sequence ID" value="NM_114534.3"/>
</dbReference>
<dbReference type="SMR" id="Q9SNB1"/>
<dbReference type="FunCoup" id="Q9SNB1">
    <property type="interactions" value="189"/>
</dbReference>
<dbReference type="STRING" id="3702.Q9SNB1"/>
<dbReference type="CAZy" id="GT1">
    <property type="family name" value="Glycosyltransferase Family 1"/>
</dbReference>
<dbReference type="PaxDb" id="3702-AT3G46670.1"/>
<dbReference type="ProteomicsDB" id="228644"/>
<dbReference type="EnsemblPlants" id="AT3G46670.1">
    <property type="protein sequence ID" value="AT3G46670.1"/>
    <property type="gene ID" value="AT3G46670"/>
</dbReference>
<dbReference type="GeneID" id="823820"/>
<dbReference type="Gramene" id="AT3G46670.1">
    <property type="protein sequence ID" value="AT3G46670.1"/>
    <property type="gene ID" value="AT3G46670"/>
</dbReference>
<dbReference type="KEGG" id="ath:AT3G46670"/>
<dbReference type="Araport" id="AT3G46670"/>
<dbReference type="TAIR" id="AT3G46670">
    <property type="gene designation" value="UGT76E11"/>
</dbReference>
<dbReference type="eggNOG" id="KOG1192">
    <property type="taxonomic scope" value="Eukaryota"/>
</dbReference>
<dbReference type="HOGENOM" id="CLU_001724_0_0_1"/>
<dbReference type="InParanoid" id="Q9SNB1"/>
<dbReference type="OMA" id="QFTFISI"/>
<dbReference type="OrthoDB" id="5835829at2759"/>
<dbReference type="PhylomeDB" id="Q9SNB1"/>
<dbReference type="PRO" id="PR:Q9SNB1"/>
<dbReference type="Proteomes" id="UP000006548">
    <property type="component" value="Chromosome 3"/>
</dbReference>
<dbReference type="ExpressionAtlas" id="Q9SNB1">
    <property type="expression patterns" value="baseline and differential"/>
</dbReference>
<dbReference type="GO" id="GO:0080043">
    <property type="term" value="F:quercetin 3-O-glucosyltransferase activity"/>
    <property type="evidence" value="ECO:0000314"/>
    <property type="project" value="TAIR"/>
</dbReference>
<dbReference type="GO" id="GO:0080044">
    <property type="term" value="F:quercetin 7-O-glucosyltransferase activity"/>
    <property type="evidence" value="ECO:0000314"/>
    <property type="project" value="TAIR"/>
</dbReference>
<dbReference type="CDD" id="cd03784">
    <property type="entry name" value="GT1_Gtf-like"/>
    <property type="match status" value="1"/>
</dbReference>
<dbReference type="FunFam" id="3.40.50.2000:FF:000040">
    <property type="entry name" value="UDP-glycosyltransferase 76C1"/>
    <property type="match status" value="1"/>
</dbReference>
<dbReference type="FunFam" id="3.40.50.2000:FF:000151">
    <property type="entry name" value="UDP-glycosyltransferase 76E9"/>
    <property type="match status" value="1"/>
</dbReference>
<dbReference type="Gene3D" id="3.40.50.2000">
    <property type="entry name" value="Glycogen Phosphorylase B"/>
    <property type="match status" value="2"/>
</dbReference>
<dbReference type="InterPro" id="IPR002213">
    <property type="entry name" value="UDP_glucos_trans"/>
</dbReference>
<dbReference type="PANTHER" id="PTHR11926:SF1494">
    <property type="entry name" value="FLAVONOL 3-O-GLUCOSYLTRANSFERASE UGT76E12-RELATED"/>
    <property type="match status" value="1"/>
</dbReference>
<dbReference type="PANTHER" id="PTHR11926">
    <property type="entry name" value="GLUCOSYL/GLUCURONOSYL TRANSFERASES"/>
    <property type="match status" value="1"/>
</dbReference>
<dbReference type="Pfam" id="PF00201">
    <property type="entry name" value="UDPGT"/>
    <property type="match status" value="1"/>
</dbReference>
<dbReference type="SUPFAM" id="SSF53756">
    <property type="entry name" value="UDP-Glycosyltransferase/glycogen phosphorylase"/>
    <property type="match status" value="1"/>
</dbReference>